<name>ARGLA_DANRE</name>
<sequence length="251" mass="30422">MGRSRSRSSSRSKHSKHSRKRSRSKSKSKKRSRSKEPKRNRRSRSRSGSRRDRGGSPPDRTDMFGRTLSKRNNDEKQKREEEDRRVEIERQRKIRQQEIEERLIEEETARRVEELVARRVEEELEKRRDEIEHEVLRRVEEAKRIMEAQLLQELERQRQAELNAQKAREEEEKSKRVELERILEENNRKIADAQAKLAEDQLRIVEEQRKIHEERMKLEQERQKQQKEEQKMILGKGKSRPRLSFSLKATE</sequence>
<reference key="1">
    <citation type="journal article" date="2013" name="Nature">
        <title>The zebrafish reference genome sequence and its relationship to the human genome.</title>
        <authorList>
            <person name="Howe K."/>
            <person name="Clark M.D."/>
            <person name="Torroja C.F."/>
            <person name="Torrance J."/>
            <person name="Berthelot C."/>
            <person name="Muffato M."/>
            <person name="Collins J.E."/>
            <person name="Humphray S."/>
            <person name="McLaren K."/>
            <person name="Matthews L."/>
            <person name="McLaren S."/>
            <person name="Sealy I."/>
            <person name="Caccamo M."/>
            <person name="Churcher C."/>
            <person name="Scott C."/>
            <person name="Barrett J.C."/>
            <person name="Koch R."/>
            <person name="Rauch G.J."/>
            <person name="White S."/>
            <person name="Chow W."/>
            <person name="Kilian B."/>
            <person name="Quintais L.T."/>
            <person name="Guerra-Assuncao J.A."/>
            <person name="Zhou Y."/>
            <person name="Gu Y."/>
            <person name="Yen J."/>
            <person name="Vogel J.H."/>
            <person name="Eyre T."/>
            <person name="Redmond S."/>
            <person name="Banerjee R."/>
            <person name="Chi J."/>
            <person name="Fu B."/>
            <person name="Langley E."/>
            <person name="Maguire S.F."/>
            <person name="Laird G.K."/>
            <person name="Lloyd D."/>
            <person name="Kenyon E."/>
            <person name="Donaldson S."/>
            <person name="Sehra H."/>
            <person name="Almeida-King J."/>
            <person name="Loveland J."/>
            <person name="Trevanion S."/>
            <person name="Jones M."/>
            <person name="Quail M."/>
            <person name="Willey D."/>
            <person name="Hunt A."/>
            <person name="Burton J."/>
            <person name="Sims S."/>
            <person name="McLay K."/>
            <person name="Plumb B."/>
            <person name="Davis J."/>
            <person name="Clee C."/>
            <person name="Oliver K."/>
            <person name="Clark R."/>
            <person name="Riddle C."/>
            <person name="Elliot D."/>
            <person name="Threadgold G."/>
            <person name="Harden G."/>
            <person name="Ware D."/>
            <person name="Begum S."/>
            <person name="Mortimore B."/>
            <person name="Kerry G."/>
            <person name="Heath P."/>
            <person name="Phillimore B."/>
            <person name="Tracey A."/>
            <person name="Corby N."/>
            <person name="Dunn M."/>
            <person name="Johnson C."/>
            <person name="Wood J."/>
            <person name="Clark S."/>
            <person name="Pelan S."/>
            <person name="Griffiths G."/>
            <person name="Smith M."/>
            <person name="Glithero R."/>
            <person name="Howden P."/>
            <person name="Barker N."/>
            <person name="Lloyd C."/>
            <person name="Stevens C."/>
            <person name="Harley J."/>
            <person name="Holt K."/>
            <person name="Panagiotidis G."/>
            <person name="Lovell J."/>
            <person name="Beasley H."/>
            <person name="Henderson C."/>
            <person name="Gordon D."/>
            <person name="Auger K."/>
            <person name="Wright D."/>
            <person name="Collins J."/>
            <person name="Raisen C."/>
            <person name="Dyer L."/>
            <person name="Leung K."/>
            <person name="Robertson L."/>
            <person name="Ambridge K."/>
            <person name="Leongamornlert D."/>
            <person name="McGuire S."/>
            <person name="Gilderthorp R."/>
            <person name="Griffiths C."/>
            <person name="Manthravadi D."/>
            <person name="Nichol S."/>
            <person name="Barker G."/>
            <person name="Whitehead S."/>
            <person name="Kay M."/>
            <person name="Brown J."/>
            <person name="Murnane C."/>
            <person name="Gray E."/>
            <person name="Humphries M."/>
            <person name="Sycamore N."/>
            <person name="Barker D."/>
            <person name="Saunders D."/>
            <person name="Wallis J."/>
            <person name="Babbage A."/>
            <person name="Hammond S."/>
            <person name="Mashreghi-Mohammadi M."/>
            <person name="Barr L."/>
            <person name="Martin S."/>
            <person name="Wray P."/>
            <person name="Ellington A."/>
            <person name="Matthews N."/>
            <person name="Ellwood M."/>
            <person name="Woodmansey R."/>
            <person name="Clark G."/>
            <person name="Cooper J."/>
            <person name="Tromans A."/>
            <person name="Grafham D."/>
            <person name="Skuce C."/>
            <person name="Pandian R."/>
            <person name="Andrews R."/>
            <person name="Harrison E."/>
            <person name="Kimberley A."/>
            <person name="Garnett J."/>
            <person name="Fosker N."/>
            <person name="Hall R."/>
            <person name="Garner P."/>
            <person name="Kelly D."/>
            <person name="Bird C."/>
            <person name="Palmer S."/>
            <person name="Gehring I."/>
            <person name="Berger A."/>
            <person name="Dooley C.M."/>
            <person name="Ersan-Urun Z."/>
            <person name="Eser C."/>
            <person name="Geiger H."/>
            <person name="Geisler M."/>
            <person name="Karotki L."/>
            <person name="Kirn A."/>
            <person name="Konantz J."/>
            <person name="Konantz M."/>
            <person name="Oberlander M."/>
            <person name="Rudolph-Geiger S."/>
            <person name="Teucke M."/>
            <person name="Lanz C."/>
            <person name="Raddatz G."/>
            <person name="Osoegawa K."/>
            <person name="Zhu B."/>
            <person name="Rapp A."/>
            <person name="Widaa S."/>
            <person name="Langford C."/>
            <person name="Yang F."/>
            <person name="Schuster S.C."/>
            <person name="Carter N.P."/>
            <person name="Harrow J."/>
            <person name="Ning Z."/>
            <person name="Herrero J."/>
            <person name="Searle S.M."/>
            <person name="Enright A."/>
            <person name="Geisler R."/>
            <person name="Plasterk R.H."/>
            <person name="Lee C."/>
            <person name="Westerfield M."/>
            <person name="de Jong P.J."/>
            <person name="Zon L.I."/>
            <person name="Postlethwait J.H."/>
            <person name="Nusslein-Volhard C."/>
            <person name="Hubbard T.J."/>
            <person name="Roest Crollius H."/>
            <person name="Rogers J."/>
            <person name="Stemple D.L."/>
        </authorList>
    </citation>
    <scope>NUCLEOTIDE SEQUENCE [LARGE SCALE GENOMIC DNA]</scope>
    <source>
        <strain>Tuebingen</strain>
    </source>
</reference>
<reference key="2">
    <citation type="submission" date="2003-11" db="EMBL/GenBank/DDBJ databases">
        <authorList>
            <consortium name="NIH - Zebrafish Gene Collection (ZGC) project"/>
        </authorList>
    </citation>
    <scope>NUCLEOTIDE SEQUENCE [LARGE SCALE MRNA]</scope>
    <source>
        <strain>AB</strain>
    </source>
</reference>
<reference key="3">
    <citation type="journal article" date="2019" name="Nucleic Acids Res.">
        <title>ARGLU1 is a transcriptional coactivator and splicing regulator important for stress hormone signaling and development.</title>
        <authorList>
            <person name="Magomedova L."/>
            <person name="Tiefenbach J."/>
            <person name="Zilberman E."/>
            <person name="Le Billan F."/>
            <person name="Voisin V."/>
            <person name="Saikali M."/>
            <person name="Boivin V."/>
            <person name="Robitaille M."/>
            <person name="Gueroussov S."/>
            <person name="Irimia M."/>
            <person name="Ray D."/>
            <person name="Patel R."/>
            <person name="Xu C."/>
            <person name="Jeyasuria P."/>
            <person name="Bader G.D."/>
            <person name="Hughes T.R."/>
            <person name="Morris Q.D."/>
            <person name="Scott M.S."/>
            <person name="Krause H."/>
            <person name="Angers S."/>
            <person name="Blencowe B.J."/>
            <person name="Cummins C.L."/>
        </authorList>
    </citation>
    <scope>FUNCTION</scope>
    <scope>DEVELOPMENTAL STAGE</scope>
    <scope>DISRUPTION PHENOTYPE</scope>
</reference>
<accession>Q6P5L7</accession>
<accession>B0UY72</accession>
<accession>Q803Q3</accession>
<protein>
    <recommendedName>
        <fullName>Arginine and glutamate-rich protein 1-A</fullName>
    </recommendedName>
</protein>
<organism evidence="5">
    <name type="scientific">Danio rerio</name>
    <name type="common">Zebrafish</name>
    <name type="synonym">Brachydanio rerio</name>
    <dbReference type="NCBI Taxonomy" id="7955"/>
    <lineage>
        <taxon>Eukaryota</taxon>
        <taxon>Metazoa</taxon>
        <taxon>Chordata</taxon>
        <taxon>Craniata</taxon>
        <taxon>Vertebrata</taxon>
        <taxon>Euteleostomi</taxon>
        <taxon>Actinopterygii</taxon>
        <taxon>Neopterygii</taxon>
        <taxon>Teleostei</taxon>
        <taxon>Ostariophysi</taxon>
        <taxon>Cypriniformes</taxon>
        <taxon>Danionidae</taxon>
        <taxon>Danioninae</taxon>
        <taxon>Danio</taxon>
    </lineage>
</organism>
<comment type="function">
    <text evidence="1">Dual function regulator of gene expression; regulator of transcription and modulator of alternative splicing. General coactivator of nuclear receptor-induced gene expression.</text>
</comment>
<comment type="subcellular location">
    <subcellularLocation>
        <location evidence="1">Nucleus</location>
    </subcellularLocation>
    <subcellularLocation>
        <location evidence="1">Nucleus speckle</location>
    </subcellularLocation>
    <subcellularLocation>
        <location evidence="1">Chromosome</location>
    </subcellularLocation>
</comment>
<comment type="developmental stage">
    <text evidence="3">Expressed throughout the brain in developing embryos.</text>
</comment>
<comment type="domain">
    <text evidence="1">The N-terminal region can bind RNA; preferentially binds 5'-CGG[AG]GG-3' motifs.</text>
</comment>
<comment type="domain">
    <text evidence="1">The non-classical LXXLL motifs are not required for nuclear receptor coactivator activity.</text>
</comment>
<comment type="domain">
    <text evidence="1">The C-terminal region is necessary and sufficient for regulation of transcription and nuclear receptor coactivator activity. The C-terminal region is not required for RNA binding.</text>
</comment>
<comment type="disruption phenotype">
    <text evidence="3">Morpholino-mediated knockdown produces embryos with heart edema and decreased brain size (PubMed:30698747). Embryos have imparied movement without lethality up to day 9 post fertilization, after which they die due to an inability to feed (PubMed:30698747).</text>
</comment>
<comment type="similarity">
    <text evidence="4">Belongs to the ARGLU1 family.</text>
</comment>
<feature type="chain" id="PRO_0000288443" description="Arginine and glutamate-rich protein 1-A">
    <location>
        <begin position="1"/>
        <end position="251"/>
    </location>
</feature>
<feature type="region of interest" description="Disordered" evidence="2">
    <location>
        <begin position="1"/>
        <end position="92"/>
    </location>
</feature>
<feature type="region of interest" description="Necessary and sufficient for RNA binding" evidence="1">
    <location>
        <begin position="1"/>
        <end position="53"/>
    </location>
</feature>
<feature type="region of interest" description="Necessary and sufficient for transcriptional regulation" evidence="1">
    <location>
        <begin position="54"/>
        <end position="251"/>
    </location>
</feature>
<feature type="region of interest" description="Disordered" evidence="2">
    <location>
        <begin position="215"/>
        <end position="251"/>
    </location>
</feature>
<feature type="compositionally biased region" description="Basic residues" evidence="2">
    <location>
        <begin position="1"/>
        <end position="48"/>
    </location>
</feature>
<feature type="compositionally biased region" description="Basic and acidic residues" evidence="2">
    <location>
        <begin position="49"/>
        <end position="63"/>
    </location>
</feature>
<feature type="compositionally biased region" description="Basic and acidic residues" evidence="2">
    <location>
        <begin position="71"/>
        <end position="92"/>
    </location>
</feature>
<feature type="compositionally biased region" description="Basic and acidic residues" evidence="2">
    <location>
        <begin position="215"/>
        <end position="231"/>
    </location>
</feature>
<feature type="sequence conflict" description="In Ref. 2; AAH44383." evidence="4" ref="2">
    <original>R</original>
    <variation>W</variation>
    <location>
        <position position="66"/>
    </location>
</feature>
<feature type="sequence conflict" description="In Ref. 2; AAH44383." evidence="4" ref="2">
    <original>Q</original>
    <variation>L</variation>
    <location>
        <position position="157"/>
    </location>
</feature>
<keyword id="KW-0158">Chromosome</keyword>
<keyword id="KW-0507">mRNA processing</keyword>
<keyword id="KW-0508">mRNA splicing</keyword>
<keyword id="KW-0539">Nucleus</keyword>
<keyword id="KW-1185">Reference proteome</keyword>
<keyword id="KW-0694">RNA-binding</keyword>
<gene>
    <name type="primary">arglu1a</name>
    <name type="ORF">si:ch211-149b20.2</name>
    <name type="ORF">zgc:55375</name>
</gene>
<evidence type="ECO:0000250" key="1">
    <source>
        <dbReference type="UniProtKB" id="Q9NWB6"/>
    </source>
</evidence>
<evidence type="ECO:0000256" key="2">
    <source>
        <dbReference type="SAM" id="MobiDB-lite"/>
    </source>
</evidence>
<evidence type="ECO:0000269" key="3">
    <source>
    </source>
</evidence>
<evidence type="ECO:0000305" key="4"/>
<evidence type="ECO:0000312" key="5">
    <source>
        <dbReference type="Proteomes" id="UP000000437"/>
    </source>
</evidence>
<proteinExistence type="evidence at transcript level"/>
<dbReference type="EMBL" id="CR391949">
    <property type="protein sequence ID" value="CAQ15594.1"/>
    <property type="molecule type" value="Genomic_DNA"/>
</dbReference>
<dbReference type="EMBL" id="BC044383">
    <property type="protein sequence ID" value="AAH44383.1"/>
    <property type="molecule type" value="mRNA"/>
</dbReference>
<dbReference type="EMBL" id="BC062839">
    <property type="protein sequence ID" value="AAH62839.1"/>
    <property type="molecule type" value="mRNA"/>
</dbReference>
<dbReference type="RefSeq" id="NP_998381.2">
    <property type="nucleotide sequence ID" value="NM_213216.2"/>
</dbReference>
<dbReference type="SMR" id="Q6P5L7"/>
<dbReference type="FunCoup" id="Q6P5L7">
    <property type="interactions" value="1497"/>
</dbReference>
<dbReference type="STRING" id="7955.ENSDARP00000013189"/>
<dbReference type="PaxDb" id="7955-ENSDARP00000013189"/>
<dbReference type="Ensembl" id="ENSDART00000011910">
    <property type="protein sequence ID" value="ENSDARP00000013189"/>
    <property type="gene ID" value="ENSDARG00000019223"/>
</dbReference>
<dbReference type="GeneID" id="406834"/>
<dbReference type="KEGG" id="dre:406834"/>
<dbReference type="AGR" id="ZFIN:ZDB-GENE-040426-2914"/>
<dbReference type="CTD" id="406834"/>
<dbReference type="ZFIN" id="ZDB-GENE-040426-2914">
    <property type="gene designation" value="arglu1a"/>
</dbReference>
<dbReference type="eggNOG" id="ENOG502QPR5">
    <property type="taxonomic scope" value="Eukaryota"/>
</dbReference>
<dbReference type="HOGENOM" id="CLU_076749_0_0_1"/>
<dbReference type="InParanoid" id="Q6P5L7"/>
<dbReference type="OMA" id="RMEVERY"/>
<dbReference type="OrthoDB" id="5862042at2759"/>
<dbReference type="TreeFam" id="TF324123"/>
<dbReference type="PRO" id="PR:Q6P5L7"/>
<dbReference type="Proteomes" id="UP000000437">
    <property type="component" value="Chromosome 9"/>
</dbReference>
<dbReference type="Bgee" id="ENSDARG00000019223">
    <property type="expression patterns" value="Expressed in brain and 28 other cell types or tissues"/>
</dbReference>
<dbReference type="GO" id="GO:0005694">
    <property type="term" value="C:chromosome"/>
    <property type="evidence" value="ECO:0007669"/>
    <property type="project" value="UniProtKB-SubCell"/>
</dbReference>
<dbReference type="GO" id="GO:0005739">
    <property type="term" value="C:mitochondrion"/>
    <property type="evidence" value="ECO:0000318"/>
    <property type="project" value="GO_Central"/>
</dbReference>
<dbReference type="GO" id="GO:0016607">
    <property type="term" value="C:nuclear speck"/>
    <property type="evidence" value="ECO:0000250"/>
    <property type="project" value="UniProtKB"/>
</dbReference>
<dbReference type="GO" id="GO:0005654">
    <property type="term" value="C:nucleoplasm"/>
    <property type="evidence" value="ECO:0000318"/>
    <property type="project" value="GO_Central"/>
</dbReference>
<dbReference type="GO" id="GO:0036002">
    <property type="term" value="F:pre-mRNA binding"/>
    <property type="evidence" value="ECO:0000250"/>
    <property type="project" value="UniProtKB"/>
</dbReference>
<dbReference type="GO" id="GO:0003713">
    <property type="term" value="F:transcription coactivator activity"/>
    <property type="evidence" value="ECO:0000250"/>
    <property type="project" value="UniProtKB"/>
</dbReference>
<dbReference type="GO" id="GO:0006397">
    <property type="term" value="P:mRNA processing"/>
    <property type="evidence" value="ECO:0007669"/>
    <property type="project" value="UniProtKB-KW"/>
</dbReference>
<dbReference type="GO" id="GO:0000381">
    <property type="term" value="P:regulation of alternative mRNA splicing, via spliceosome"/>
    <property type="evidence" value="ECO:0000250"/>
    <property type="project" value="UniProtKB"/>
</dbReference>
<dbReference type="GO" id="GO:0008380">
    <property type="term" value="P:RNA splicing"/>
    <property type="evidence" value="ECO:0007669"/>
    <property type="project" value="UniProtKB-KW"/>
</dbReference>
<dbReference type="InterPro" id="IPR033371">
    <property type="entry name" value="ARGLU1"/>
</dbReference>
<dbReference type="PANTHER" id="PTHR31711">
    <property type="entry name" value="ARGININE AND GLUTAMATE-RICH PROTEIN 1"/>
    <property type="match status" value="1"/>
</dbReference>
<dbReference type="PANTHER" id="PTHR31711:SF1">
    <property type="entry name" value="ARGININE AND GLUTAMATE-RICH PROTEIN 1"/>
    <property type="match status" value="1"/>
</dbReference>
<dbReference type="Pfam" id="PF15346">
    <property type="entry name" value="ARGLU"/>
    <property type="match status" value="1"/>
</dbReference>